<protein>
    <recommendedName>
        <fullName evidence="1">Large ribosomal subunit protein eL37</fullName>
    </recommendedName>
    <alternativeName>
        <fullName evidence="2">50S ribosomal protein L37e</fullName>
    </alternativeName>
</protein>
<organism>
    <name type="scientific">Methanospirillum hungatei JF-1 (strain ATCC 27890 / DSM 864 / NBRC 100397 / JF-1)</name>
    <dbReference type="NCBI Taxonomy" id="323259"/>
    <lineage>
        <taxon>Archaea</taxon>
        <taxon>Methanobacteriati</taxon>
        <taxon>Methanobacteriota</taxon>
        <taxon>Stenosarchaea group</taxon>
        <taxon>Methanomicrobia</taxon>
        <taxon>Methanomicrobiales</taxon>
        <taxon>Methanospirillaceae</taxon>
        <taxon>Methanospirillum</taxon>
    </lineage>
</organism>
<feature type="chain" id="PRO_1000017763" description="Large ribosomal subunit protein eL37">
    <location>
        <begin position="1"/>
        <end position="60"/>
    </location>
</feature>
<feature type="zinc finger region" description="C4-type" evidence="1">
    <location>
        <begin position="19"/>
        <end position="37"/>
    </location>
</feature>
<feature type="binding site" evidence="1">
    <location>
        <position position="19"/>
    </location>
    <ligand>
        <name>Zn(2+)</name>
        <dbReference type="ChEBI" id="CHEBI:29105"/>
    </ligand>
</feature>
<feature type="binding site" evidence="1">
    <location>
        <position position="22"/>
    </location>
    <ligand>
        <name>Zn(2+)</name>
        <dbReference type="ChEBI" id="CHEBI:29105"/>
    </ligand>
</feature>
<feature type="binding site" evidence="1">
    <location>
        <position position="34"/>
    </location>
    <ligand>
        <name>Zn(2+)</name>
        <dbReference type="ChEBI" id="CHEBI:29105"/>
    </ligand>
</feature>
<feature type="binding site" evidence="1">
    <location>
        <position position="37"/>
    </location>
    <ligand>
        <name>Zn(2+)</name>
        <dbReference type="ChEBI" id="CHEBI:29105"/>
    </ligand>
</feature>
<gene>
    <name evidence="1" type="primary">rpl37e</name>
    <name type="ordered locus">Mhun_3060</name>
</gene>
<sequence length="60" mass="6983">MSKGTPSRGKRQTQTHLTCRRCGRMSYHKRHKICSSCGFGRSTRMRSYGWITKRPKVATH</sequence>
<proteinExistence type="inferred from homology"/>
<reference key="1">
    <citation type="journal article" date="2016" name="Stand. Genomic Sci.">
        <title>Complete genome sequence of Methanospirillum hungatei type strain JF1.</title>
        <authorList>
            <person name="Gunsalus R.P."/>
            <person name="Cook L.E."/>
            <person name="Crable B."/>
            <person name="Rohlin L."/>
            <person name="McDonald E."/>
            <person name="Mouttaki H."/>
            <person name="Sieber J.R."/>
            <person name="Poweleit N."/>
            <person name="Zhou H."/>
            <person name="Lapidus A.L."/>
            <person name="Daligault H.E."/>
            <person name="Land M."/>
            <person name="Gilna P."/>
            <person name="Ivanova N."/>
            <person name="Kyrpides N."/>
            <person name="Culley D.E."/>
            <person name="McInerney M.J."/>
        </authorList>
    </citation>
    <scope>NUCLEOTIDE SEQUENCE [LARGE SCALE GENOMIC DNA]</scope>
    <source>
        <strain>ATCC 27890 / DSM 864 / NBRC 100397 / JF-1</strain>
    </source>
</reference>
<accession>Q2FT51</accession>
<dbReference type="EMBL" id="CP000254">
    <property type="protein sequence ID" value="ABD42747.1"/>
    <property type="molecule type" value="Genomic_DNA"/>
</dbReference>
<dbReference type="SMR" id="Q2FT51"/>
<dbReference type="FunCoup" id="Q2FT51">
    <property type="interactions" value="105"/>
</dbReference>
<dbReference type="STRING" id="323259.Mhun_3060"/>
<dbReference type="EnsemblBacteria" id="ABD42747">
    <property type="protein sequence ID" value="ABD42747"/>
    <property type="gene ID" value="Mhun_3060"/>
</dbReference>
<dbReference type="KEGG" id="mhu:Mhun_3060"/>
<dbReference type="eggNOG" id="arCOG04126">
    <property type="taxonomic scope" value="Archaea"/>
</dbReference>
<dbReference type="HOGENOM" id="CLU_208825_0_0_2"/>
<dbReference type="InParanoid" id="Q2FT51"/>
<dbReference type="OrthoDB" id="5619at2157"/>
<dbReference type="Proteomes" id="UP000001941">
    <property type="component" value="Chromosome"/>
</dbReference>
<dbReference type="GO" id="GO:0022625">
    <property type="term" value="C:cytosolic large ribosomal subunit"/>
    <property type="evidence" value="ECO:0007669"/>
    <property type="project" value="TreeGrafter"/>
</dbReference>
<dbReference type="GO" id="GO:0019843">
    <property type="term" value="F:rRNA binding"/>
    <property type="evidence" value="ECO:0007669"/>
    <property type="project" value="UniProtKB-KW"/>
</dbReference>
<dbReference type="GO" id="GO:0003735">
    <property type="term" value="F:structural constituent of ribosome"/>
    <property type="evidence" value="ECO:0007669"/>
    <property type="project" value="InterPro"/>
</dbReference>
<dbReference type="GO" id="GO:0008270">
    <property type="term" value="F:zinc ion binding"/>
    <property type="evidence" value="ECO:0007669"/>
    <property type="project" value="UniProtKB-UniRule"/>
</dbReference>
<dbReference type="GO" id="GO:0006412">
    <property type="term" value="P:translation"/>
    <property type="evidence" value="ECO:0007669"/>
    <property type="project" value="UniProtKB-UniRule"/>
</dbReference>
<dbReference type="FunFam" id="2.20.25.30:FF:000003">
    <property type="entry name" value="50S ribosomal protein L37e"/>
    <property type="match status" value="1"/>
</dbReference>
<dbReference type="Gene3D" id="2.20.25.30">
    <property type="match status" value="1"/>
</dbReference>
<dbReference type="HAMAP" id="MF_00547">
    <property type="entry name" value="Ribosomal_eL37"/>
    <property type="match status" value="1"/>
</dbReference>
<dbReference type="InterPro" id="IPR001569">
    <property type="entry name" value="Ribosomal_eL37"/>
</dbReference>
<dbReference type="InterPro" id="IPR011331">
    <property type="entry name" value="Ribosomal_eL37/eL43"/>
</dbReference>
<dbReference type="InterPro" id="IPR018267">
    <property type="entry name" value="Ribosomal_eL37_CS"/>
</dbReference>
<dbReference type="InterPro" id="IPR011332">
    <property type="entry name" value="Ribosomal_zn-bd"/>
</dbReference>
<dbReference type="NCBIfam" id="NF003214">
    <property type="entry name" value="PRK04179.1"/>
    <property type="match status" value="1"/>
</dbReference>
<dbReference type="PANTHER" id="PTHR10768">
    <property type="entry name" value="60S RIBOSOMAL PROTEIN L37"/>
    <property type="match status" value="1"/>
</dbReference>
<dbReference type="PANTHER" id="PTHR10768:SF0">
    <property type="entry name" value="RIBOSOMAL PROTEIN L37"/>
    <property type="match status" value="1"/>
</dbReference>
<dbReference type="Pfam" id="PF01907">
    <property type="entry name" value="Ribosomal_L37e"/>
    <property type="match status" value="1"/>
</dbReference>
<dbReference type="SUPFAM" id="SSF57829">
    <property type="entry name" value="Zn-binding ribosomal proteins"/>
    <property type="match status" value="1"/>
</dbReference>
<dbReference type="PROSITE" id="PS01077">
    <property type="entry name" value="RIBOSOMAL_L37E"/>
    <property type="match status" value="1"/>
</dbReference>
<comment type="function">
    <text evidence="1">Binds to the 23S rRNA.</text>
</comment>
<comment type="cofactor">
    <cofactor evidence="1">
        <name>Zn(2+)</name>
        <dbReference type="ChEBI" id="CHEBI:29105"/>
    </cofactor>
    <text evidence="1">Binds 1 zinc ion per subunit.</text>
</comment>
<comment type="similarity">
    <text evidence="1">Belongs to the eukaryotic ribosomal protein eL37 family.</text>
</comment>
<name>RL37_METHJ</name>
<evidence type="ECO:0000255" key="1">
    <source>
        <dbReference type="HAMAP-Rule" id="MF_00547"/>
    </source>
</evidence>
<evidence type="ECO:0000305" key="2"/>
<keyword id="KW-0479">Metal-binding</keyword>
<keyword id="KW-1185">Reference proteome</keyword>
<keyword id="KW-0687">Ribonucleoprotein</keyword>
<keyword id="KW-0689">Ribosomal protein</keyword>
<keyword id="KW-0694">RNA-binding</keyword>
<keyword id="KW-0699">rRNA-binding</keyword>
<keyword id="KW-0862">Zinc</keyword>
<keyword id="KW-0863">Zinc-finger</keyword>